<sequence length="472" mass="53411">MAFCSPAMMNYNIASNFGDSESASVRQTSSPSLLWSAPGHLSPLTLHCQLSLLYAEQPKSPWCEARPLEPVLPVSRETLKRKTNGSDCTSPIASNPGSKRDAHFCAVCSDYASGYHYGVWSCEGCKAFFKRSIQGHNDYICPATNQCTIDKNRRKSCQACRLRKCYEVGMMKCGSRRERCGYRILRRHRNSEDCMGKTKKYNEAATRVKEILLSTVSPEQFVLTLLEAEPPNVLVSRPSKPFTEASMMMSLTKLADKELVHMIGWAKKIPGFIDLSLYDQVRLLESCWLEVLMIGLMWRSIDHPGKLIFAPDLVLDRDEGKCVEGILEIFDMLLAMTSRFRELKLQHKEYLCVKAMILLNSSMFPLSAEEPESNRKLHHLLNVVTDALVWVIAKSGIPSQQQTTRLANLLMLLSHVRHASNKGMEHLLSMKCKNVVPVYDLLLEMLNAHTLRGQRKSPVTHPDFEQVSHFQV</sequence>
<gene>
    <name type="primary">ESR2</name>
    <name type="synonym">NR3A2</name>
</gene>
<organism>
    <name type="scientific">Coturnix japonica</name>
    <name type="common">Japanese quail</name>
    <name type="synonym">Coturnix coturnix japonica</name>
    <dbReference type="NCBI Taxonomy" id="93934"/>
    <lineage>
        <taxon>Eukaryota</taxon>
        <taxon>Metazoa</taxon>
        <taxon>Chordata</taxon>
        <taxon>Craniata</taxon>
        <taxon>Vertebrata</taxon>
        <taxon>Euteleostomi</taxon>
        <taxon>Archelosauria</taxon>
        <taxon>Archosauria</taxon>
        <taxon>Dinosauria</taxon>
        <taxon>Saurischia</taxon>
        <taxon>Theropoda</taxon>
        <taxon>Coelurosauria</taxon>
        <taxon>Aves</taxon>
        <taxon>Neognathae</taxon>
        <taxon>Galloanserae</taxon>
        <taxon>Galliformes</taxon>
        <taxon>Phasianidae</taxon>
        <taxon>Perdicinae</taxon>
        <taxon>Coturnix</taxon>
    </lineage>
</organism>
<dbReference type="EMBL" id="AF045149">
    <property type="protein sequence ID" value="AAC36463.2"/>
    <property type="molecule type" value="mRNA"/>
</dbReference>
<dbReference type="SMR" id="O93511"/>
<dbReference type="Proteomes" id="UP000694412">
    <property type="component" value="Unplaced"/>
</dbReference>
<dbReference type="GO" id="GO:0005634">
    <property type="term" value="C:nucleus"/>
    <property type="evidence" value="ECO:0007669"/>
    <property type="project" value="UniProtKB-SubCell"/>
</dbReference>
<dbReference type="GO" id="GO:0030284">
    <property type="term" value="F:nuclear estrogen receptor activity"/>
    <property type="evidence" value="ECO:0007669"/>
    <property type="project" value="InterPro"/>
</dbReference>
<dbReference type="GO" id="GO:0043565">
    <property type="term" value="F:sequence-specific DNA binding"/>
    <property type="evidence" value="ECO:0007669"/>
    <property type="project" value="InterPro"/>
</dbReference>
<dbReference type="GO" id="GO:0005496">
    <property type="term" value="F:steroid binding"/>
    <property type="evidence" value="ECO:0000250"/>
    <property type="project" value="UniProtKB"/>
</dbReference>
<dbReference type="GO" id="GO:0008270">
    <property type="term" value="F:zinc ion binding"/>
    <property type="evidence" value="ECO:0007669"/>
    <property type="project" value="UniProtKB-KW"/>
</dbReference>
<dbReference type="GO" id="GO:0071392">
    <property type="term" value="P:cellular response to estradiol stimulus"/>
    <property type="evidence" value="ECO:0007669"/>
    <property type="project" value="InterPro"/>
</dbReference>
<dbReference type="GO" id="GO:0030520">
    <property type="term" value="P:estrogen receptor signaling pathway"/>
    <property type="evidence" value="ECO:0007669"/>
    <property type="project" value="InterPro"/>
</dbReference>
<dbReference type="CDD" id="cd07171">
    <property type="entry name" value="NR_DBD_ER"/>
    <property type="match status" value="1"/>
</dbReference>
<dbReference type="CDD" id="cd06949">
    <property type="entry name" value="NR_LBD_ER"/>
    <property type="match status" value="1"/>
</dbReference>
<dbReference type="FunFam" id="1.10.565.10:FF:000010">
    <property type="entry name" value="Estrogen receptor"/>
    <property type="match status" value="1"/>
</dbReference>
<dbReference type="FunFam" id="3.30.50.10:FF:000014">
    <property type="entry name" value="Estrogen receptor beta"/>
    <property type="match status" value="1"/>
</dbReference>
<dbReference type="Gene3D" id="3.30.50.10">
    <property type="entry name" value="Erythroid Transcription Factor GATA-1, subunit A"/>
    <property type="match status" value="1"/>
</dbReference>
<dbReference type="Gene3D" id="1.10.565.10">
    <property type="entry name" value="Retinoid X Receptor"/>
    <property type="match status" value="1"/>
</dbReference>
<dbReference type="InterPro" id="IPR021064">
    <property type="entry name" value="ER-beta-like_N"/>
</dbReference>
<dbReference type="InterPro" id="IPR028355">
    <property type="entry name" value="ER-beta/gamma"/>
</dbReference>
<dbReference type="InterPro" id="IPR024178">
    <property type="entry name" value="Est_rcpt/est-rel_rcp"/>
</dbReference>
<dbReference type="InterPro" id="IPR035500">
    <property type="entry name" value="NHR-like_dom_sf"/>
</dbReference>
<dbReference type="InterPro" id="IPR000536">
    <property type="entry name" value="Nucl_hrmn_rcpt_lig-bd"/>
</dbReference>
<dbReference type="InterPro" id="IPR050200">
    <property type="entry name" value="Nuclear_hormone_rcpt_NR3"/>
</dbReference>
<dbReference type="InterPro" id="IPR001723">
    <property type="entry name" value="Nuclear_hrmn_rcpt"/>
</dbReference>
<dbReference type="InterPro" id="IPR001628">
    <property type="entry name" value="Znf_hrmn_rcpt"/>
</dbReference>
<dbReference type="InterPro" id="IPR013088">
    <property type="entry name" value="Znf_NHR/GATA"/>
</dbReference>
<dbReference type="PANTHER" id="PTHR48092">
    <property type="entry name" value="KNIRPS-RELATED PROTEIN-RELATED"/>
    <property type="match status" value="1"/>
</dbReference>
<dbReference type="Pfam" id="PF12497">
    <property type="entry name" value="ERbeta_N"/>
    <property type="match status" value="1"/>
</dbReference>
<dbReference type="Pfam" id="PF00104">
    <property type="entry name" value="Hormone_recep"/>
    <property type="match status" value="1"/>
</dbReference>
<dbReference type="Pfam" id="PF00105">
    <property type="entry name" value="zf-C4"/>
    <property type="match status" value="1"/>
</dbReference>
<dbReference type="PIRSF" id="PIRSF500102">
    <property type="entry name" value="ER-b"/>
    <property type="match status" value="1"/>
</dbReference>
<dbReference type="PIRSF" id="PIRSF002527">
    <property type="entry name" value="ER-like_NR"/>
    <property type="match status" value="1"/>
</dbReference>
<dbReference type="PRINTS" id="PR00398">
    <property type="entry name" value="STRDHORMONER"/>
</dbReference>
<dbReference type="PRINTS" id="PR00047">
    <property type="entry name" value="STROIDFINGER"/>
</dbReference>
<dbReference type="SMART" id="SM00430">
    <property type="entry name" value="HOLI"/>
    <property type="match status" value="1"/>
</dbReference>
<dbReference type="SMART" id="SM00399">
    <property type="entry name" value="ZnF_C4"/>
    <property type="match status" value="1"/>
</dbReference>
<dbReference type="SUPFAM" id="SSF57716">
    <property type="entry name" value="Glucocorticoid receptor-like (DNA-binding domain)"/>
    <property type="match status" value="1"/>
</dbReference>
<dbReference type="SUPFAM" id="SSF48508">
    <property type="entry name" value="Nuclear receptor ligand-binding domain"/>
    <property type="match status" value="1"/>
</dbReference>
<dbReference type="PROSITE" id="PS51843">
    <property type="entry name" value="NR_LBD"/>
    <property type="match status" value="1"/>
</dbReference>
<dbReference type="PROSITE" id="PS00031">
    <property type="entry name" value="NUCLEAR_REC_DBD_1"/>
    <property type="match status" value="1"/>
</dbReference>
<dbReference type="PROSITE" id="PS51030">
    <property type="entry name" value="NUCLEAR_REC_DBD_2"/>
    <property type="match status" value="1"/>
</dbReference>
<name>ESR2_COTJA</name>
<comment type="function">
    <text evidence="2">Binds estrogens with an affinity similar to that of ER-alpha, and activates expression of reporter genes containing estrogen response elements (ERE) in an estrogen-dependent manner.</text>
</comment>
<comment type="subunit">
    <text evidence="1">Binds DNA as a homodimer. Can form a heterodimer with ER-alpha (By similarity).</text>
</comment>
<comment type="subcellular location">
    <subcellularLocation>
        <location>Nucleus</location>
    </subcellularLocation>
</comment>
<comment type="tissue specificity">
    <text>A high expression is seen in the telencephalon, diencephalon, pituitary, testis and kidneys but little or no expression is seen in the cerebellum, pectoral muscle and adrenal gland.</text>
</comment>
<comment type="domain">
    <text>Composed of three domains: a modulating N-terminal domain, a DNA-binding domain and a C-terminal ligand-binding domain.</text>
</comment>
<comment type="similarity">
    <text evidence="5">Belongs to the nuclear hormone receptor family. NR3 subfamily.</text>
</comment>
<reference key="1">
    <citation type="submission" date="1998-09" db="EMBL/GenBank/DDBJ databases">
        <title>Sequence and neuroanatomical distribution of estrogen receptor beta in the quail brain.</title>
        <authorList>
            <person name="Foidart A."/>
            <person name="Lakaye B."/>
            <person name="Grisar T."/>
            <person name="Ball G.F."/>
            <person name="Balthazart J."/>
        </authorList>
    </citation>
    <scope>NUCLEOTIDE SEQUENCE [MRNA]</scope>
</reference>
<reference key="2">
    <citation type="journal article" date="1998" name="NeuroReport">
        <title>Partial cloning and distribution of estrogen receptor beta in the avian brain.</title>
        <authorList>
            <person name="Lakaye B."/>
            <person name="Foidart A."/>
            <person name="Grisar T."/>
            <person name="Balthazart J."/>
        </authorList>
    </citation>
    <scope>NUCLEOTIDE SEQUENCE [MRNA] OF 141-286</scope>
    <source>
        <tissue>Testis</tissue>
    </source>
</reference>
<protein>
    <recommendedName>
        <fullName>Estrogen receptor beta</fullName>
        <shortName>ER-beta</shortName>
    </recommendedName>
    <alternativeName>
        <fullName>Nuclear receptor subfamily 3 group A member 2</fullName>
    </alternativeName>
</protein>
<feature type="chain" id="PRO_0000053649" description="Estrogen receptor beta">
    <location>
        <begin position="1"/>
        <end position="472"/>
    </location>
</feature>
<feature type="domain" description="NR LBD" evidence="4">
    <location>
        <begin position="217"/>
        <end position="449"/>
    </location>
</feature>
<feature type="DNA-binding region" description="Nuclear receptor" evidence="3">
    <location>
        <begin position="105"/>
        <end position="170"/>
    </location>
</feature>
<feature type="zinc finger region" description="NR C4-type" evidence="3">
    <location>
        <begin position="105"/>
        <end position="125"/>
    </location>
</feature>
<feature type="zinc finger region" description="NR C4-type" evidence="3">
    <location>
        <begin position="141"/>
        <end position="165"/>
    </location>
</feature>
<feature type="region of interest" description="Modulating">
    <location>
        <begin position="1"/>
        <end position="104"/>
    </location>
</feature>
<accession>O93511</accession>
<proteinExistence type="evidence at transcript level"/>
<keyword id="KW-0238">DNA-binding</keyword>
<keyword id="KW-0446">Lipid-binding</keyword>
<keyword id="KW-0479">Metal-binding</keyword>
<keyword id="KW-0539">Nucleus</keyword>
<keyword id="KW-0675">Receptor</keyword>
<keyword id="KW-1185">Reference proteome</keyword>
<keyword id="KW-0754">Steroid-binding</keyword>
<keyword id="KW-0804">Transcription</keyword>
<keyword id="KW-0805">Transcription regulation</keyword>
<keyword id="KW-0862">Zinc</keyword>
<keyword id="KW-0863">Zinc-finger</keyword>
<evidence type="ECO:0000250" key="1"/>
<evidence type="ECO:0000250" key="2">
    <source>
        <dbReference type="UniProtKB" id="Q92731"/>
    </source>
</evidence>
<evidence type="ECO:0000255" key="3">
    <source>
        <dbReference type="PROSITE-ProRule" id="PRU00407"/>
    </source>
</evidence>
<evidence type="ECO:0000255" key="4">
    <source>
        <dbReference type="PROSITE-ProRule" id="PRU01189"/>
    </source>
</evidence>
<evidence type="ECO:0000305" key="5"/>